<keyword id="KW-1185">Reference proteome</keyword>
<keyword id="KW-0833">Ubl conjugation pathway</keyword>
<accession>Q6C0B6</accession>
<sequence>MVRSDWRAQEIRRVMTFTGSKEKTARDALEKFDWNVEVAIDHILNTPQVDLSGASKVFDKYRNADSDEIDLDGTIQYITDLGLSLEEPTVLAVAMTAGSPSVGTFTRKPFVEGWAAIGGDTLPAQQKLCRSFAESMTSLNADFQKIYKFTYGFLLQEGQRVLPQETAVDYWRLLLTGKYEHLDKWLSFVTEKYKRNISRDAWNMLYEFMLFQAKDPSLESYDEDGAWPSVIDEYVEFLKE</sequence>
<name>DCN1_YARLI</name>
<organism>
    <name type="scientific">Yarrowia lipolytica (strain CLIB 122 / E 150)</name>
    <name type="common">Yeast</name>
    <name type="synonym">Candida lipolytica</name>
    <dbReference type="NCBI Taxonomy" id="284591"/>
    <lineage>
        <taxon>Eukaryota</taxon>
        <taxon>Fungi</taxon>
        <taxon>Dikarya</taxon>
        <taxon>Ascomycota</taxon>
        <taxon>Saccharomycotina</taxon>
        <taxon>Dipodascomycetes</taxon>
        <taxon>Dipodascales</taxon>
        <taxon>Dipodascales incertae sedis</taxon>
        <taxon>Yarrowia</taxon>
    </lineage>
</organism>
<reference key="1">
    <citation type="journal article" date="2004" name="Nature">
        <title>Genome evolution in yeasts.</title>
        <authorList>
            <person name="Dujon B."/>
            <person name="Sherman D."/>
            <person name="Fischer G."/>
            <person name="Durrens P."/>
            <person name="Casaregola S."/>
            <person name="Lafontaine I."/>
            <person name="de Montigny J."/>
            <person name="Marck C."/>
            <person name="Neuveglise C."/>
            <person name="Talla E."/>
            <person name="Goffard N."/>
            <person name="Frangeul L."/>
            <person name="Aigle M."/>
            <person name="Anthouard V."/>
            <person name="Babour A."/>
            <person name="Barbe V."/>
            <person name="Barnay S."/>
            <person name="Blanchin S."/>
            <person name="Beckerich J.-M."/>
            <person name="Beyne E."/>
            <person name="Bleykasten C."/>
            <person name="Boisrame A."/>
            <person name="Boyer J."/>
            <person name="Cattolico L."/>
            <person name="Confanioleri F."/>
            <person name="de Daruvar A."/>
            <person name="Despons L."/>
            <person name="Fabre E."/>
            <person name="Fairhead C."/>
            <person name="Ferry-Dumazet H."/>
            <person name="Groppi A."/>
            <person name="Hantraye F."/>
            <person name="Hennequin C."/>
            <person name="Jauniaux N."/>
            <person name="Joyet P."/>
            <person name="Kachouri R."/>
            <person name="Kerrest A."/>
            <person name="Koszul R."/>
            <person name="Lemaire M."/>
            <person name="Lesur I."/>
            <person name="Ma L."/>
            <person name="Muller H."/>
            <person name="Nicaud J.-M."/>
            <person name="Nikolski M."/>
            <person name="Oztas S."/>
            <person name="Ozier-Kalogeropoulos O."/>
            <person name="Pellenz S."/>
            <person name="Potier S."/>
            <person name="Richard G.-F."/>
            <person name="Straub M.-L."/>
            <person name="Suleau A."/>
            <person name="Swennen D."/>
            <person name="Tekaia F."/>
            <person name="Wesolowski-Louvel M."/>
            <person name="Westhof E."/>
            <person name="Wirth B."/>
            <person name="Zeniou-Meyer M."/>
            <person name="Zivanovic Y."/>
            <person name="Bolotin-Fukuhara M."/>
            <person name="Thierry A."/>
            <person name="Bouchier C."/>
            <person name="Caudron B."/>
            <person name="Scarpelli C."/>
            <person name="Gaillardin C."/>
            <person name="Weissenbach J."/>
            <person name="Wincker P."/>
            <person name="Souciet J.-L."/>
        </authorList>
    </citation>
    <scope>NUCLEOTIDE SEQUENCE [LARGE SCALE GENOMIC DNA]</scope>
    <source>
        <strain>CLIB 122 / E 150</strain>
    </source>
</reference>
<dbReference type="EMBL" id="CR382132">
    <property type="protein sequence ID" value="CAG78708.1"/>
    <property type="molecule type" value="Genomic_DNA"/>
</dbReference>
<dbReference type="RefSeq" id="XP_505896.1">
    <property type="nucleotide sequence ID" value="XM_505896.1"/>
</dbReference>
<dbReference type="SMR" id="Q6C0B6"/>
<dbReference type="FunCoup" id="Q6C0B6">
    <property type="interactions" value="435"/>
</dbReference>
<dbReference type="STRING" id="284591.Q6C0B6"/>
<dbReference type="EnsemblFungi" id="CAG78708">
    <property type="protein sequence ID" value="CAG78708"/>
    <property type="gene ID" value="YALI0_F26147g"/>
</dbReference>
<dbReference type="KEGG" id="yli:2908110"/>
<dbReference type="VEuPathDB" id="FungiDB:YALI0_F26147g"/>
<dbReference type="HOGENOM" id="CLU_047042_0_1_1"/>
<dbReference type="InParanoid" id="Q6C0B6"/>
<dbReference type="OMA" id="LWCKFLQ"/>
<dbReference type="OrthoDB" id="97382at4891"/>
<dbReference type="Proteomes" id="UP000001300">
    <property type="component" value="Chromosome F"/>
</dbReference>
<dbReference type="GO" id="GO:0000151">
    <property type="term" value="C:ubiquitin ligase complex"/>
    <property type="evidence" value="ECO:0000318"/>
    <property type="project" value="GO_Central"/>
</dbReference>
<dbReference type="GO" id="GO:0097602">
    <property type="term" value="F:cullin family protein binding"/>
    <property type="evidence" value="ECO:0000318"/>
    <property type="project" value="GO_Central"/>
</dbReference>
<dbReference type="GO" id="GO:0031624">
    <property type="term" value="F:ubiquitin conjugating enzyme binding"/>
    <property type="evidence" value="ECO:0000318"/>
    <property type="project" value="GO_Central"/>
</dbReference>
<dbReference type="GO" id="GO:0032182">
    <property type="term" value="F:ubiquitin-like protein binding"/>
    <property type="evidence" value="ECO:0000318"/>
    <property type="project" value="GO_Central"/>
</dbReference>
<dbReference type="GO" id="GO:0045116">
    <property type="term" value="P:protein neddylation"/>
    <property type="evidence" value="ECO:0000318"/>
    <property type="project" value="GO_Central"/>
</dbReference>
<dbReference type="FunFam" id="1.10.238.200:FF:000003">
    <property type="entry name" value="DCN1-like protein 3"/>
    <property type="match status" value="1"/>
</dbReference>
<dbReference type="Gene3D" id="1.10.238.200">
    <property type="entry name" value="Cullin, PONY binding domain"/>
    <property type="match status" value="1"/>
</dbReference>
<dbReference type="Gene3D" id="1.10.238.10">
    <property type="entry name" value="EF-hand"/>
    <property type="match status" value="1"/>
</dbReference>
<dbReference type="InterPro" id="IPR014764">
    <property type="entry name" value="DCN-prot"/>
</dbReference>
<dbReference type="InterPro" id="IPR042460">
    <property type="entry name" value="DCN1-like_PONY"/>
</dbReference>
<dbReference type="InterPro" id="IPR005176">
    <property type="entry name" value="PONY_dom"/>
</dbReference>
<dbReference type="InterPro" id="IPR009060">
    <property type="entry name" value="UBA-like_sf"/>
</dbReference>
<dbReference type="PANTHER" id="PTHR12281:SF31">
    <property type="entry name" value="DCN1-LIKE PROTEIN 3"/>
    <property type="match status" value="1"/>
</dbReference>
<dbReference type="PANTHER" id="PTHR12281">
    <property type="entry name" value="RP42 RELATED"/>
    <property type="match status" value="1"/>
</dbReference>
<dbReference type="Pfam" id="PF03556">
    <property type="entry name" value="Cullin_binding"/>
    <property type="match status" value="1"/>
</dbReference>
<dbReference type="Pfam" id="PF14555">
    <property type="entry name" value="UBA_4"/>
    <property type="match status" value="1"/>
</dbReference>
<dbReference type="SUPFAM" id="SSF46934">
    <property type="entry name" value="UBA-like"/>
    <property type="match status" value="1"/>
</dbReference>
<dbReference type="PROSITE" id="PS51229">
    <property type="entry name" value="DCUN1"/>
    <property type="match status" value="1"/>
</dbReference>
<proteinExistence type="inferred from homology"/>
<comment type="function">
    <text evidence="1">May contribute to neddylation of cullin components of SCF-type E3 ubiquitin ligase complexes. Neddylation of cullins play an essential role in the regulation of SCF-type complexes activity (By similarity).</text>
</comment>
<evidence type="ECO:0000250" key="1"/>
<evidence type="ECO:0000255" key="2">
    <source>
        <dbReference type="PROSITE-ProRule" id="PRU00574"/>
    </source>
</evidence>
<gene>
    <name type="primary">DCN1</name>
    <name type="ordered locus">YALI0F26147g</name>
</gene>
<feature type="chain" id="PRO_0000129517" description="Defective in cullin neddylation protein 1">
    <location>
        <begin position="1"/>
        <end position="240"/>
    </location>
</feature>
<feature type="domain" description="UBA-like">
    <location>
        <begin position="7"/>
        <end position="44"/>
    </location>
</feature>
<feature type="domain" description="DCUN1" evidence="2">
    <location>
        <begin position="49"/>
        <end position="239"/>
    </location>
</feature>
<protein>
    <recommendedName>
        <fullName>Defective in cullin neddylation protein 1</fullName>
    </recommendedName>
</protein>